<organism>
    <name type="scientific">Escherichia coli O8 (strain IAI1)</name>
    <dbReference type="NCBI Taxonomy" id="585034"/>
    <lineage>
        <taxon>Bacteria</taxon>
        <taxon>Pseudomonadati</taxon>
        <taxon>Pseudomonadota</taxon>
        <taxon>Gammaproteobacteria</taxon>
        <taxon>Enterobacterales</taxon>
        <taxon>Enterobacteriaceae</taxon>
        <taxon>Escherichia</taxon>
    </lineage>
</organism>
<protein>
    <recommendedName>
        <fullName evidence="1">3-phenylpropionate-dihydrodiol/cinnamic acid-dihydrodiol dehydrogenase</fullName>
        <ecNumber evidence="1">1.3.1.87</ecNumber>
    </recommendedName>
    <alternativeName>
        <fullName evidence="1">2,3-dihydroxy-2,3-dihydrophenylpropionate dehydrogenase</fullName>
    </alternativeName>
    <alternativeName>
        <fullName evidence="1">3-(cis-5,6-dihydroxycyclohexa-1,3-dien-1-yl)propanoate dehydrogenase</fullName>
    </alternativeName>
    <alternativeName>
        <fullName evidence="1">CI-dihydrodiol dehydrogenase</fullName>
    </alternativeName>
    <alternativeName>
        <fullName evidence="1">Cis-3-(2-carboxyethenyl)-3,5-cyclohexadiene-1,2-diol dehydrogenase</fullName>
    </alternativeName>
    <alternativeName>
        <fullName evidence="1">Cis-3-(2-carboxyethyl)-3,5-cyclohexadiene-1,2-diol dehydrogenase</fullName>
    </alternativeName>
    <alternativeName>
        <fullName evidence="1">PP-dihydrodiol dehydrogenase</fullName>
    </alternativeName>
</protein>
<sequence length="270" mass="28486">MSDLHNESIFITGGGSGLGLALVERFIEEGAQVATLELSAAKVASLRQRFGEHILAVEGNVTCYADYQRAVDQILTRSGKLDCFIGNAGIWDHNASLVNTPAETLETGFHELFNVNVLGYLLGAKACAPALISSEGSMIFTLSNAAWYPGGGGPLYTASKHAATGLIRQLAYELAPKVRVNGVGPCGMASDLRGPQALGQSETSIMQSLTPEKIAAILPLQFFPQPADFTGPYVMLASRRNNRALSGVMINADAGLAIRGIRHVAAGLDL</sequence>
<dbReference type="EC" id="1.3.1.87" evidence="1"/>
<dbReference type="EMBL" id="CU928160">
    <property type="protein sequence ID" value="CAQ99432.1"/>
    <property type="molecule type" value="Genomic_DNA"/>
</dbReference>
<dbReference type="RefSeq" id="WP_001281385.1">
    <property type="nucleotide sequence ID" value="NC_011741.1"/>
</dbReference>
<dbReference type="SMR" id="B7M7P4"/>
<dbReference type="KEGG" id="ecr:ECIAI1_2593"/>
<dbReference type="HOGENOM" id="CLU_010194_1_0_6"/>
<dbReference type="UniPathway" id="UPA00714"/>
<dbReference type="GO" id="GO:0018498">
    <property type="term" value="F:2,3-dihydroxy-2,3-dihydro-phenylpropionate dehydrogenase activity"/>
    <property type="evidence" value="ECO:0007669"/>
    <property type="project" value="UniProtKB-UniRule"/>
</dbReference>
<dbReference type="GO" id="GO:0019380">
    <property type="term" value="P:3-phenylpropionate catabolic process"/>
    <property type="evidence" value="ECO:0007669"/>
    <property type="project" value="UniProtKB-UniRule"/>
</dbReference>
<dbReference type="CDD" id="cd05348">
    <property type="entry name" value="BphB-like_SDR_c"/>
    <property type="match status" value="1"/>
</dbReference>
<dbReference type="FunFam" id="3.40.50.720:FF:000151">
    <property type="entry name" value="3-phenylpropionate-dihydrodiol/cinnamic acid-dihydrodiol dehydrogenase"/>
    <property type="match status" value="1"/>
</dbReference>
<dbReference type="Gene3D" id="3.40.50.720">
    <property type="entry name" value="NAD(P)-binding Rossmann-like Domain"/>
    <property type="match status" value="1"/>
</dbReference>
<dbReference type="HAMAP" id="MF_01647">
    <property type="entry name" value="HcaB"/>
    <property type="match status" value="1"/>
</dbReference>
<dbReference type="InterPro" id="IPR047950">
    <property type="entry name" value="BphB-like_SDR"/>
</dbReference>
<dbReference type="InterPro" id="IPR023643">
    <property type="entry name" value="Dihydrodiol_DH_HcaB"/>
</dbReference>
<dbReference type="InterPro" id="IPR036291">
    <property type="entry name" value="NAD(P)-bd_dom_sf"/>
</dbReference>
<dbReference type="InterPro" id="IPR020904">
    <property type="entry name" value="Sc_DH/Rdtase_CS"/>
</dbReference>
<dbReference type="InterPro" id="IPR002347">
    <property type="entry name" value="SDR_fam"/>
</dbReference>
<dbReference type="NCBIfam" id="NF042950">
    <property type="entry name" value="3PPDhyd_Dh_HcaB"/>
    <property type="match status" value="1"/>
</dbReference>
<dbReference type="NCBIfam" id="NF004849">
    <property type="entry name" value="PRK06200.1"/>
    <property type="match status" value="1"/>
</dbReference>
<dbReference type="PANTHER" id="PTHR43943:SF17">
    <property type="entry name" value="3-PHENYLPROPIONATE-DIHYDRODIOL_CINNAMIC ACID-DIHYDRODIOL DEHYDROGENASE"/>
    <property type="match status" value="1"/>
</dbReference>
<dbReference type="PANTHER" id="PTHR43943">
    <property type="entry name" value="DEHYDROGENASE/REDUCTASE (SDR FAMILY) MEMBER 4"/>
    <property type="match status" value="1"/>
</dbReference>
<dbReference type="Pfam" id="PF00106">
    <property type="entry name" value="adh_short"/>
    <property type="match status" value="1"/>
</dbReference>
<dbReference type="PRINTS" id="PR00081">
    <property type="entry name" value="GDHRDH"/>
</dbReference>
<dbReference type="PRINTS" id="PR00080">
    <property type="entry name" value="SDRFAMILY"/>
</dbReference>
<dbReference type="SUPFAM" id="SSF51735">
    <property type="entry name" value="NAD(P)-binding Rossmann-fold domains"/>
    <property type="match status" value="1"/>
</dbReference>
<dbReference type="PROSITE" id="PS00061">
    <property type="entry name" value="ADH_SHORT"/>
    <property type="match status" value="1"/>
</dbReference>
<comment type="function">
    <text evidence="1">Converts 3-phenylpropionate-dihydrodiol (PP-dihydrodiol) and cinnamic acid-dihydrodiol (CI-dihydrodiol) into 3-(2,3-dihydroxylphenyl)propanoic acid (DHPP) and 2,3-dihydroxicinnamic acid (DHCI), respectively.</text>
</comment>
<comment type="catalytic activity">
    <reaction evidence="1">
        <text>3-(cis-5,6-dihydroxycyclohexa-1,3-dien-1-yl)propanoate + NAD(+) = 3-(2,3-dihydroxyphenyl)propanoate + NADH + H(+)</text>
        <dbReference type="Rhea" id="RHEA:25062"/>
        <dbReference type="ChEBI" id="CHEBI:15378"/>
        <dbReference type="ChEBI" id="CHEBI:46951"/>
        <dbReference type="ChEBI" id="CHEBI:57540"/>
        <dbReference type="ChEBI" id="CHEBI:57945"/>
        <dbReference type="ChEBI" id="CHEBI:60087"/>
        <dbReference type="EC" id="1.3.1.87"/>
    </reaction>
</comment>
<comment type="catalytic activity">
    <reaction evidence="1">
        <text>(2E)-3-(cis-5,6-dihydroxycyclohexa-1,3-dien-1-yl)prop-2-enoate + NAD(+) = (2E)-3-(2,3-dihydroxyphenyl)prop-2-enoate + NADH + H(+)</text>
        <dbReference type="Rhea" id="RHEA:25066"/>
        <dbReference type="ChEBI" id="CHEBI:15378"/>
        <dbReference type="ChEBI" id="CHEBI:57540"/>
        <dbReference type="ChEBI" id="CHEBI:57945"/>
        <dbReference type="ChEBI" id="CHEBI:58642"/>
        <dbReference type="ChEBI" id="CHEBI:61451"/>
        <dbReference type="EC" id="1.3.1.87"/>
    </reaction>
</comment>
<comment type="pathway">
    <text evidence="1">Aromatic compound metabolism; 3-phenylpropanoate degradation.</text>
</comment>
<comment type="similarity">
    <text evidence="1">Belongs to the short-chain dehydrogenases/reductases (SDR) family.</text>
</comment>
<proteinExistence type="inferred from homology"/>
<reference key="1">
    <citation type="journal article" date="2009" name="PLoS Genet.">
        <title>Organised genome dynamics in the Escherichia coli species results in highly diverse adaptive paths.</title>
        <authorList>
            <person name="Touchon M."/>
            <person name="Hoede C."/>
            <person name="Tenaillon O."/>
            <person name="Barbe V."/>
            <person name="Baeriswyl S."/>
            <person name="Bidet P."/>
            <person name="Bingen E."/>
            <person name="Bonacorsi S."/>
            <person name="Bouchier C."/>
            <person name="Bouvet O."/>
            <person name="Calteau A."/>
            <person name="Chiapello H."/>
            <person name="Clermont O."/>
            <person name="Cruveiller S."/>
            <person name="Danchin A."/>
            <person name="Diard M."/>
            <person name="Dossat C."/>
            <person name="Karoui M.E."/>
            <person name="Frapy E."/>
            <person name="Garry L."/>
            <person name="Ghigo J.M."/>
            <person name="Gilles A.M."/>
            <person name="Johnson J."/>
            <person name="Le Bouguenec C."/>
            <person name="Lescat M."/>
            <person name="Mangenot S."/>
            <person name="Martinez-Jehanne V."/>
            <person name="Matic I."/>
            <person name="Nassif X."/>
            <person name="Oztas S."/>
            <person name="Petit M.A."/>
            <person name="Pichon C."/>
            <person name="Rouy Z."/>
            <person name="Ruf C.S."/>
            <person name="Schneider D."/>
            <person name="Tourret J."/>
            <person name="Vacherie B."/>
            <person name="Vallenet D."/>
            <person name="Medigue C."/>
            <person name="Rocha E.P.C."/>
            <person name="Denamur E."/>
        </authorList>
    </citation>
    <scope>NUCLEOTIDE SEQUENCE [LARGE SCALE GENOMIC DNA]</scope>
    <source>
        <strain>IAI1</strain>
    </source>
</reference>
<feature type="chain" id="PRO_1000186966" description="3-phenylpropionate-dihydrodiol/cinnamic acid-dihydrodiol dehydrogenase">
    <location>
        <begin position="1"/>
        <end position="270"/>
    </location>
</feature>
<feature type="active site" description="Proton acceptor" evidence="1">
    <location>
        <position position="156"/>
    </location>
</feature>
<feature type="binding site" evidence="1">
    <location>
        <begin position="10"/>
        <end position="34"/>
    </location>
    <ligand>
        <name>NAD(+)</name>
        <dbReference type="ChEBI" id="CHEBI:57540"/>
    </ligand>
</feature>
<feature type="binding site" evidence="1">
    <location>
        <position position="143"/>
    </location>
    <ligand>
        <name>substrate</name>
    </ligand>
</feature>
<gene>
    <name evidence="1" type="primary">hcaB</name>
    <name type="ordered locus">ECIAI1_2593</name>
</gene>
<name>HCAB_ECO8A</name>
<keyword id="KW-0058">Aromatic hydrocarbons catabolism</keyword>
<keyword id="KW-0520">NAD</keyword>
<keyword id="KW-0560">Oxidoreductase</keyword>
<accession>B7M7P4</accession>
<evidence type="ECO:0000255" key="1">
    <source>
        <dbReference type="HAMAP-Rule" id="MF_01647"/>
    </source>
</evidence>